<sequence length="304" mass="32809">MASMTPAEMARVLGSGLLSFPVTHFRDDLSFDETAYRDNLGRLADYKVSGLFAAGGTGEFFSLTPAEIDRVLRAAVEETRGRTPVIAPAGQGTALAVEMARAAEAAGADGILLLPPYLVGSEQAGLAAHIEAVCRATALGIIVYNRANAQLDERTLAGLCERCPNLVGFKDGVGDVELMTRVYAALGDRLTYIGGLPTAETFALPYLEMGVTTYSSAIFNFLPEWALSFYDSVRRRDRDAVYRELRDFVLPYIAIRNRKRGYAVSIVKAGMSAVGRHAGPVRPPLTELDAAERAELTALIGDRR</sequence>
<reference key="1">
    <citation type="submission" date="2008-03" db="EMBL/GenBank/DDBJ databases">
        <title>Complete sequence of chromosome of Methylobacterium radiotolerans JCM 2831.</title>
        <authorList>
            <consortium name="US DOE Joint Genome Institute"/>
            <person name="Copeland A."/>
            <person name="Lucas S."/>
            <person name="Lapidus A."/>
            <person name="Glavina del Rio T."/>
            <person name="Dalin E."/>
            <person name="Tice H."/>
            <person name="Bruce D."/>
            <person name="Goodwin L."/>
            <person name="Pitluck S."/>
            <person name="Kiss H."/>
            <person name="Brettin T."/>
            <person name="Detter J.C."/>
            <person name="Han C."/>
            <person name="Kuske C.R."/>
            <person name="Schmutz J."/>
            <person name="Larimer F."/>
            <person name="Land M."/>
            <person name="Hauser L."/>
            <person name="Kyrpides N."/>
            <person name="Mikhailova N."/>
            <person name="Marx C.J."/>
            <person name="Richardson P."/>
        </authorList>
    </citation>
    <scope>NUCLEOTIDE SEQUENCE [LARGE SCALE GENOMIC DNA]</scope>
    <source>
        <strain>ATCC 27329 / DSM 1819 / JCM 2831 / NBRC 15690 / NCIMB 10815 / 0-1</strain>
    </source>
</reference>
<protein>
    <recommendedName>
        <fullName evidence="1">Probable 5-dehydro-4-deoxyglucarate dehydratase</fullName>
        <ecNumber evidence="1">4.2.1.41</ecNumber>
    </recommendedName>
    <alternativeName>
        <fullName evidence="1">5-keto-4-deoxy-glucarate dehydratase</fullName>
        <shortName evidence="1">KDGDH</shortName>
    </alternativeName>
</protein>
<comment type="catalytic activity">
    <reaction evidence="1">
        <text>5-dehydro-4-deoxy-D-glucarate + H(+) = 2,5-dioxopentanoate + CO2 + H2O</text>
        <dbReference type="Rhea" id="RHEA:24608"/>
        <dbReference type="ChEBI" id="CHEBI:15377"/>
        <dbReference type="ChEBI" id="CHEBI:15378"/>
        <dbReference type="ChEBI" id="CHEBI:16526"/>
        <dbReference type="ChEBI" id="CHEBI:42819"/>
        <dbReference type="ChEBI" id="CHEBI:58136"/>
        <dbReference type="EC" id="4.2.1.41"/>
    </reaction>
</comment>
<comment type="pathway">
    <text evidence="1">Carbohydrate acid metabolism; D-glucarate degradation; 2,5-dioxopentanoate from D-glucarate: step 2/2.</text>
</comment>
<comment type="similarity">
    <text evidence="1">Belongs to the DapA family.</text>
</comment>
<feature type="chain" id="PRO_1000132271" description="Probable 5-dehydro-4-deoxyglucarate dehydratase">
    <location>
        <begin position="1"/>
        <end position="304"/>
    </location>
</feature>
<accession>B1LW44</accession>
<name>KDGD_METRJ</name>
<gene>
    <name type="ordered locus">Mrad2831_5150</name>
</gene>
<organism>
    <name type="scientific">Methylobacterium radiotolerans (strain ATCC 27329 / DSM 1819 / JCM 2831 / NBRC 15690 / NCIMB 10815 / 0-1)</name>
    <dbReference type="NCBI Taxonomy" id="426355"/>
    <lineage>
        <taxon>Bacteria</taxon>
        <taxon>Pseudomonadati</taxon>
        <taxon>Pseudomonadota</taxon>
        <taxon>Alphaproteobacteria</taxon>
        <taxon>Hyphomicrobiales</taxon>
        <taxon>Methylobacteriaceae</taxon>
        <taxon>Methylobacterium</taxon>
    </lineage>
</organism>
<evidence type="ECO:0000255" key="1">
    <source>
        <dbReference type="HAMAP-Rule" id="MF_00694"/>
    </source>
</evidence>
<keyword id="KW-0456">Lyase</keyword>
<proteinExistence type="inferred from homology"/>
<dbReference type="EC" id="4.2.1.41" evidence="1"/>
<dbReference type="EMBL" id="CP001001">
    <property type="protein sequence ID" value="ACB27107.1"/>
    <property type="molecule type" value="Genomic_DNA"/>
</dbReference>
<dbReference type="RefSeq" id="WP_012322051.1">
    <property type="nucleotide sequence ID" value="NC_010505.1"/>
</dbReference>
<dbReference type="SMR" id="B1LW44"/>
<dbReference type="STRING" id="426355.Mrad2831_5150"/>
<dbReference type="GeneID" id="6141220"/>
<dbReference type="KEGG" id="mrd:Mrad2831_5150"/>
<dbReference type="PATRIC" id="fig|426355.14.peg.5224"/>
<dbReference type="eggNOG" id="COG0329">
    <property type="taxonomic scope" value="Bacteria"/>
</dbReference>
<dbReference type="HOGENOM" id="CLU_049343_5_2_5"/>
<dbReference type="OrthoDB" id="8995637at2"/>
<dbReference type="UniPathway" id="UPA00564">
    <property type="reaction ID" value="UER00628"/>
</dbReference>
<dbReference type="Proteomes" id="UP000006589">
    <property type="component" value="Chromosome"/>
</dbReference>
<dbReference type="GO" id="GO:0008840">
    <property type="term" value="F:4-hydroxy-tetrahydrodipicolinate synthase activity"/>
    <property type="evidence" value="ECO:0007669"/>
    <property type="project" value="TreeGrafter"/>
</dbReference>
<dbReference type="GO" id="GO:0047448">
    <property type="term" value="F:5-dehydro-4-deoxyglucarate dehydratase activity"/>
    <property type="evidence" value="ECO:0007669"/>
    <property type="project" value="UniProtKB-UniRule"/>
</dbReference>
<dbReference type="GO" id="GO:0042838">
    <property type="term" value="P:D-glucarate catabolic process"/>
    <property type="evidence" value="ECO:0007669"/>
    <property type="project" value="UniProtKB-UniRule"/>
</dbReference>
<dbReference type="CDD" id="cd00951">
    <property type="entry name" value="KDGDH"/>
    <property type="match status" value="1"/>
</dbReference>
<dbReference type="Gene3D" id="3.20.20.70">
    <property type="entry name" value="Aldolase class I"/>
    <property type="match status" value="1"/>
</dbReference>
<dbReference type="HAMAP" id="MF_00694">
    <property type="entry name" value="KDGDH"/>
    <property type="match status" value="1"/>
</dbReference>
<dbReference type="InterPro" id="IPR013785">
    <property type="entry name" value="Aldolase_TIM"/>
</dbReference>
<dbReference type="InterPro" id="IPR002220">
    <property type="entry name" value="DapA-like"/>
</dbReference>
<dbReference type="InterPro" id="IPR017655">
    <property type="entry name" value="Dehydro-deoxyglucarate_dehyd"/>
</dbReference>
<dbReference type="NCBIfam" id="TIGR03249">
    <property type="entry name" value="KdgD"/>
    <property type="match status" value="1"/>
</dbReference>
<dbReference type="NCBIfam" id="NF002958">
    <property type="entry name" value="PRK03620.1"/>
    <property type="match status" value="1"/>
</dbReference>
<dbReference type="PANTHER" id="PTHR12128:SF19">
    <property type="entry name" value="5-DEHYDRO-4-DEOXYGLUCARATE DEHYDRATASE 2-RELATED"/>
    <property type="match status" value="1"/>
</dbReference>
<dbReference type="PANTHER" id="PTHR12128">
    <property type="entry name" value="DIHYDRODIPICOLINATE SYNTHASE"/>
    <property type="match status" value="1"/>
</dbReference>
<dbReference type="Pfam" id="PF00701">
    <property type="entry name" value="DHDPS"/>
    <property type="match status" value="1"/>
</dbReference>
<dbReference type="PIRSF" id="PIRSF001365">
    <property type="entry name" value="DHDPS"/>
    <property type="match status" value="1"/>
</dbReference>
<dbReference type="SMART" id="SM01130">
    <property type="entry name" value="DHDPS"/>
    <property type="match status" value="1"/>
</dbReference>
<dbReference type="SUPFAM" id="SSF51569">
    <property type="entry name" value="Aldolase"/>
    <property type="match status" value="1"/>
</dbReference>